<evidence type="ECO:0000255" key="1">
    <source>
        <dbReference type="HAMAP-Rule" id="MF_01551"/>
    </source>
</evidence>
<comment type="function">
    <text evidence="1">Catalyzes the 2'-O-methylation at nucleotide C2498 in 23S rRNA.</text>
</comment>
<comment type="catalytic activity">
    <reaction evidence="1">
        <text>cytidine(2498) in 23S rRNA + S-adenosyl-L-methionine = 2'-O-methylcytidine(2498) in 23S rRNA + S-adenosyl-L-homocysteine + H(+)</text>
        <dbReference type="Rhea" id="RHEA:42788"/>
        <dbReference type="Rhea" id="RHEA-COMP:10244"/>
        <dbReference type="Rhea" id="RHEA-COMP:10245"/>
        <dbReference type="ChEBI" id="CHEBI:15378"/>
        <dbReference type="ChEBI" id="CHEBI:57856"/>
        <dbReference type="ChEBI" id="CHEBI:59789"/>
        <dbReference type="ChEBI" id="CHEBI:74495"/>
        <dbReference type="ChEBI" id="CHEBI:82748"/>
        <dbReference type="EC" id="2.1.1.186"/>
    </reaction>
</comment>
<comment type="subunit">
    <text evidence="1">Monomer.</text>
</comment>
<comment type="subcellular location">
    <subcellularLocation>
        <location evidence="1">Cytoplasm</location>
    </subcellularLocation>
</comment>
<comment type="similarity">
    <text evidence="1">Belongs to the class I-like SAM-binding methyltransferase superfamily. RNA methyltransferase RlmE family. RlmM subfamily.</text>
</comment>
<proteinExistence type="inferred from homology"/>
<name>RLMM_ECOHS</name>
<reference key="1">
    <citation type="journal article" date="2008" name="J. Bacteriol.">
        <title>The pangenome structure of Escherichia coli: comparative genomic analysis of E. coli commensal and pathogenic isolates.</title>
        <authorList>
            <person name="Rasko D.A."/>
            <person name="Rosovitz M.J."/>
            <person name="Myers G.S.A."/>
            <person name="Mongodin E.F."/>
            <person name="Fricke W.F."/>
            <person name="Gajer P."/>
            <person name="Crabtree J."/>
            <person name="Sebaihia M."/>
            <person name="Thomson N.R."/>
            <person name="Chaudhuri R."/>
            <person name="Henderson I.R."/>
            <person name="Sperandio V."/>
            <person name="Ravel J."/>
        </authorList>
    </citation>
    <scope>NUCLEOTIDE SEQUENCE [LARGE SCALE GENOMIC DNA]</scope>
    <source>
        <strain>HS</strain>
    </source>
</reference>
<organism>
    <name type="scientific">Escherichia coli O9:H4 (strain HS)</name>
    <dbReference type="NCBI Taxonomy" id="331112"/>
    <lineage>
        <taxon>Bacteria</taxon>
        <taxon>Pseudomonadati</taxon>
        <taxon>Pseudomonadota</taxon>
        <taxon>Gammaproteobacteria</taxon>
        <taxon>Enterobacterales</taxon>
        <taxon>Enterobacteriaceae</taxon>
        <taxon>Escherichia</taxon>
    </lineage>
</organism>
<dbReference type="EC" id="2.1.1.186" evidence="1"/>
<dbReference type="EMBL" id="CP000802">
    <property type="protein sequence ID" value="ABV07195.1"/>
    <property type="molecule type" value="Genomic_DNA"/>
</dbReference>
<dbReference type="RefSeq" id="WP_001045520.1">
    <property type="nucleotide sequence ID" value="NC_009800.1"/>
</dbReference>
<dbReference type="SMR" id="A8A3U1"/>
<dbReference type="GeneID" id="75203803"/>
<dbReference type="KEGG" id="ecx:EcHS_A2950"/>
<dbReference type="HOGENOM" id="CLU_043780_0_0_6"/>
<dbReference type="GO" id="GO:0005737">
    <property type="term" value="C:cytoplasm"/>
    <property type="evidence" value="ECO:0007669"/>
    <property type="project" value="UniProtKB-SubCell"/>
</dbReference>
<dbReference type="GO" id="GO:0008757">
    <property type="term" value="F:S-adenosylmethionine-dependent methyltransferase activity"/>
    <property type="evidence" value="ECO:0007669"/>
    <property type="project" value="UniProtKB-UniRule"/>
</dbReference>
<dbReference type="GO" id="GO:0032259">
    <property type="term" value="P:methylation"/>
    <property type="evidence" value="ECO:0007669"/>
    <property type="project" value="UniProtKB-KW"/>
</dbReference>
<dbReference type="GO" id="GO:0006364">
    <property type="term" value="P:rRNA processing"/>
    <property type="evidence" value="ECO:0007669"/>
    <property type="project" value="UniProtKB-UniRule"/>
</dbReference>
<dbReference type="FunFam" id="3.30.2300.20:FF:000001">
    <property type="entry name" value="Ribosomal RNA large subunit methyltransferase M"/>
    <property type="match status" value="1"/>
</dbReference>
<dbReference type="FunFam" id="3.30.70.2810:FF:000001">
    <property type="entry name" value="Ribosomal RNA large subunit methyltransferase M"/>
    <property type="match status" value="1"/>
</dbReference>
<dbReference type="FunFam" id="3.40.50.150:FF:000020">
    <property type="entry name" value="Ribosomal RNA large subunit methyltransferase M"/>
    <property type="match status" value="1"/>
</dbReference>
<dbReference type="Gene3D" id="3.30.2300.20">
    <property type="match status" value="1"/>
</dbReference>
<dbReference type="Gene3D" id="3.30.70.2810">
    <property type="match status" value="1"/>
</dbReference>
<dbReference type="Gene3D" id="3.40.50.150">
    <property type="entry name" value="Vaccinia Virus protein VP39"/>
    <property type="match status" value="1"/>
</dbReference>
<dbReference type="HAMAP" id="MF_01551">
    <property type="entry name" value="23SrRNA_methyltr_M"/>
    <property type="match status" value="1"/>
</dbReference>
<dbReference type="InterPro" id="IPR040739">
    <property type="entry name" value="RlmM_FDX"/>
</dbReference>
<dbReference type="InterPro" id="IPR048646">
    <property type="entry name" value="RlmM_THUMP-like"/>
</dbReference>
<dbReference type="InterPro" id="IPR002877">
    <property type="entry name" value="RNA_MeTrfase_FtsJ_dom"/>
</dbReference>
<dbReference type="InterPro" id="IPR011224">
    <property type="entry name" value="rRNA_MeTrfase_M"/>
</dbReference>
<dbReference type="InterPro" id="IPR029063">
    <property type="entry name" value="SAM-dependent_MTases_sf"/>
</dbReference>
<dbReference type="NCBIfam" id="NF008734">
    <property type="entry name" value="PRK11760.1"/>
    <property type="match status" value="1"/>
</dbReference>
<dbReference type="PANTHER" id="PTHR37524">
    <property type="entry name" value="RIBOSOMAL RNA LARGE SUBUNIT METHYLTRANSFERASE M"/>
    <property type="match status" value="1"/>
</dbReference>
<dbReference type="PANTHER" id="PTHR37524:SF2">
    <property type="entry name" value="RIBOSOMAL RNA METHYLTRANSFERASE FTSJ DOMAIN-CONTAINING PROTEIN"/>
    <property type="match status" value="1"/>
</dbReference>
<dbReference type="Pfam" id="PF01728">
    <property type="entry name" value="FtsJ"/>
    <property type="match status" value="1"/>
</dbReference>
<dbReference type="Pfam" id="PF18125">
    <property type="entry name" value="RlmM_FDX"/>
    <property type="match status" value="1"/>
</dbReference>
<dbReference type="Pfam" id="PF21239">
    <property type="entry name" value="RLMM_N"/>
    <property type="match status" value="1"/>
</dbReference>
<dbReference type="PIRSF" id="PIRSF028774">
    <property type="entry name" value="UCP028774"/>
    <property type="match status" value="1"/>
</dbReference>
<dbReference type="SUPFAM" id="SSF53335">
    <property type="entry name" value="S-adenosyl-L-methionine-dependent methyltransferases"/>
    <property type="match status" value="1"/>
</dbReference>
<feature type="chain" id="PRO_1000073562" description="Ribosomal RNA large subunit methyltransferase M">
    <location>
        <begin position="1"/>
        <end position="366"/>
    </location>
</feature>
<feature type="active site" description="Proton acceptor" evidence="1">
    <location>
        <position position="306"/>
    </location>
</feature>
<feature type="binding site" evidence="1">
    <location>
        <position position="188"/>
    </location>
    <ligand>
        <name>S-adenosyl-L-methionine</name>
        <dbReference type="ChEBI" id="CHEBI:59789"/>
    </ligand>
</feature>
<feature type="binding site" evidence="1">
    <location>
        <begin position="221"/>
        <end position="224"/>
    </location>
    <ligand>
        <name>S-adenosyl-L-methionine</name>
        <dbReference type="ChEBI" id="CHEBI:59789"/>
    </ligand>
</feature>
<feature type="binding site" evidence="1">
    <location>
        <position position="240"/>
    </location>
    <ligand>
        <name>S-adenosyl-L-methionine</name>
        <dbReference type="ChEBI" id="CHEBI:59789"/>
    </ligand>
</feature>
<feature type="binding site" evidence="1">
    <location>
        <position position="260"/>
    </location>
    <ligand>
        <name>S-adenosyl-L-methionine</name>
        <dbReference type="ChEBI" id="CHEBI:59789"/>
    </ligand>
</feature>
<feature type="binding site" evidence="1">
    <location>
        <position position="277"/>
    </location>
    <ligand>
        <name>S-adenosyl-L-methionine</name>
        <dbReference type="ChEBI" id="CHEBI:59789"/>
    </ligand>
</feature>
<sequence>MNKVVLLCRPGFEKECAAEITDKAGQREIFGFARVKENAGYVIYECYQPDDGDKLIRELPFSSLIFARQWFVVGELLQHLPPEDRITPIVGMLQGVVEKGGELRVEVADTNESKELLKFCRKFTVPLRAALRDAGVLANYETPKRPVVHVFFIAPGCCYTGYSYSNNNSPFYMGIPRLKFPADAPSRSTLKLEEAFHVFIPADEWDERLANGMWAVDLGACPGGWTYQLVKRNMWVYSVDNGPMAQSLMDTGQVTWLREDGFKFRPTRSNISWMVCDMVEKPAKVAALMAQWLVNGWCRETIFNLKLPMKKRYEEVSHNLAYIQAQLDEHGINAQIQARQLYHDREEVTVHVRRIWAAVGGRRDER</sequence>
<keyword id="KW-0963">Cytoplasm</keyword>
<keyword id="KW-0489">Methyltransferase</keyword>
<keyword id="KW-0698">rRNA processing</keyword>
<keyword id="KW-0949">S-adenosyl-L-methionine</keyword>
<keyword id="KW-0808">Transferase</keyword>
<gene>
    <name evidence="1" type="primary">rlmM</name>
    <name type="ordered locus">EcHS_A2950</name>
</gene>
<accession>A8A3U1</accession>
<protein>
    <recommendedName>
        <fullName evidence="1">Ribosomal RNA large subunit methyltransferase M</fullName>
        <ecNumber evidence="1">2.1.1.186</ecNumber>
    </recommendedName>
    <alternativeName>
        <fullName evidence="1">23S rRNA (cytidine2498-2'-O)-methyltransferase</fullName>
    </alternativeName>
    <alternativeName>
        <fullName evidence="1">23S rRNA 2'-O-ribose methyltransferase RlmM</fullName>
    </alternativeName>
</protein>